<proteinExistence type="inferred from homology"/>
<accession>B0TBP6</accession>
<name>PAND_HELMI</name>
<protein>
    <recommendedName>
        <fullName evidence="1">Aspartate 1-decarboxylase</fullName>
        <ecNumber evidence="1">4.1.1.11</ecNumber>
    </recommendedName>
    <alternativeName>
        <fullName evidence="1">Aspartate alpha-decarboxylase</fullName>
    </alternativeName>
    <component>
        <recommendedName>
            <fullName evidence="1">Aspartate 1-decarboxylase beta chain</fullName>
        </recommendedName>
    </component>
    <component>
        <recommendedName>
            <fullName evidence="1">Aspartate 1-decarboxylase alpha chain</fullName>
        </recommendedName>
    </component>
</protein>
<organism>
    <name type="scientific">Heliobacterium modesticaldum (strain ATCC 51547 / Ice1)</name>
    <dbReference type="NCBI Taxonomy" id="498761"/>
    <lineage>
        <taxon>Bacteria</taxon>
        <taxon>Bacillati</taxon>
        <taxon>Bacillota</taxon>
        <taxon>Clostridia</taxon>
        <taxon>Eubacteriales</taxon>
        <taxon>Heliobacteriaceae</taxon>
        <taxon>Heliomicrobium</taxon>
    </lineage>
</organism>
<evidence type="ECO:0000255" key="1">
    <source>
        <dbReference type="HAMAP-Rule" id="MF_00446"/>
    </source>
</evidence>
<reference key="1">
    <citation type="journal article" date="2008" name="J. Bacteriol.">
        <title>The genome of Heliobacterium modesticaldum, a phototrophic representative of the Firmicutes containing the simplest photosynthetic apparatus.</title>
        <authorList>
            <person name="Sattley W.M."/>
            <person name="Madigan M.T."/>
            <person name="Swingley W.D."/>
            <person name="Cheung P.C."/>
            <person name="Clocksin K.M."/>
            <person name="Conrad A.L."/>
            <person name="Dejesa L.C."/>
            <person name="Honchak B.M."/>
            <person name="Jung D.O."/>
            <person name="Karbach L.E."/>
            <person name="Kurdoglu A."/>
            <person name="Lahiri S."/>
            <person name="Mastrian S.D."/>
            <person name="Page L.E."/>
            <person name="Taylor H.L."/>
            <person name="Wang Z.T."/>
            <person name="Raymond J."/>
            <person name="Chen M."/>
            <person name="Blankenship R.E."/>
            <person name="Touchman J.W."/>
        </authorList>
    </citation>
    <scope>NUCLEOTIDE SEQUENCE [LARGE SCALE GENOMIC DNA]</scope>
    <source>
        <strain>ATCC 51547 / Ice1</strain>
    </source>
</reference>
<dbReference type="EC" id="4.1.1.11" evidence="1"/>
<dbReference type="EMBL" id="CP000930">
    <property type="protein sequence ID" value="ABZ83885.1"/>
    <property type="molecule type" value="Genomic_DNA"/>
</dbReference>
<dbReference type="RefSeq" id="WP_012282403.1">
    <property type="nucleotide sequence ID" value="NC_010337.2"/>
</dbReference>
<dbReference type="SMR" id="B0TBP6"/>
<dbReference type="STRING" id="498761.HM1_0667"/>
<dbReference type="KEGG" id="hmo:HM1_0667"/>
<dbReference type="eggNOG" id="COG0853">
    <property type="taxonomic scope" value="Bacteria"/>
</dbReference>
<dbReference type="HOGENOM" id="CLU_115305_2_0_9"/>
<dbReference type="OrthoDB" id="9803983at2"/>
<dbReference type="UniPathway" id="UPA00028">
    <property type="reaction ID" value="UER00002"/>
</dbReference>
<dbReference type="Proteomes" id="UP000008550">
    <property type="component" value="Chromosome"/>
</dbReference>
<dbReference type="GO" id="GO:0005829">
    <property type="term" value="C:cytosol"/>
    <property type="evidence" value="ECO:0007669"/>
    <property type="project" value="TreeGrafter"/>
</dbReference>
<dbReference type="GO" id="GO:0004068">
    <property type="term" value="F:aspartate 1-decarboxylase activity"/>
    <property type="evidence" value="ECO:0007669"/>
    <property type="project" value="UniProtKB-UniRule"/>
</dbReference>
<dbReference type="GO" id="GO:0006523">
    <property type="term" value="P:alanine biosynthetic process"/>
    <property type="evidence" value="ECO:0007669"/>
    <property type="project" value="InterPro"/>
</dbReference>
<dbReference type="GO" id="GO:0015940">
    <property type="term" value="P:pantothenate biosynthetic process"/>
    <property type="evidence" value="ECO:0007669"/>
    <property type="project" value="UniProtKB-UniRule"/>
</dbReference>
<dbReference type="CDD" id="cd06919">
    <property type="entry name" value="Asp_decarbox"/>
    <property type="match status" value="1"/>
</dbReference>
<dbReference type="Gene3D" id="2.40.40.20">
    <property type="match status" value="1"/>
</dbReference>
<dbReference type="HAMAP" id="MF_00446">
    <property type="entry name" value="PanD"/>
    <property type="match status" value="1"/>
</dbReference>
<dbReference type="InterPro" id="IPR009010">
    <property type="entry name" value="Asp_de-COase-like_dom_sf"/>
</dbReference>
<dbReference type="InterPro" id="IPR003190">
    <property type="entry name" value="Asp_decarbox"/>
</dbReference>
<dbReference type="NCBIfam" id="TIGR00223">
    <property type="entry name" value="panD"/>
    <property type="match status" value="1"/>
</dbReference>
<dbReference type="PANTHER" id="PTHR21012">
    <property type="entry name" value="ASPARTATE 1-DECARBOXYLASE"/>
    <property type="match status" value="1"/>
</dbReference>
<dbReference type="PANTHER" id="PTHR21012:SF0">
    <property type="entry name" value="ASPARTATE 1-DECARBOXYLASE"/>
    <property type="match status" value="1"/>
</dbReference>
<dbReference type="Pfam" id="PF02261">
    <property type="entry name" value="Asp_decarbox"/>
    <property type="match status" value="1"/>
</dbReference>
<dbReference type="PIRSF" id="PIRSF006246">
    <property type="entry name" value="Asp_decarbox"/>
    <property type="match status" value="1"/>
</dbReference>
<dbReference type="SUPFAM" id="SSF50692">
    <property type="entry name" value="ADC-like"/>
    <property type="match status" value="1"/>
</dbReference>
<keyword id="KW-0068">Autocatalytic cleavage</keyword>
<keyword id="KW-0963">Cytoplasm</keyword>
<keyword id="KW-0210">Decarboxylase</keyword>
<keyword id="KW-0456">Lyase</keyword>
<keyword id="KW-0566">Pantothenate biosynthesis</keyword>
<keyword id="KW-0670">Pyruvate</keyword>
<keyword id="KW-1185">Reference proteome</keyword>
<keyword id="KW-0704">Schiff base</keyword>
<keyword id="KW-0865">Zymogen</keyword>
<gene>
    <name evidence="1" type="primary">panD</name>
    <name type="ordered locus">Helmi_12600</name>
    <name type="ORF">HM1_0667</name>
</gene>
<feature type="chain" id="PRO_1000124827" description="Aspartate 1-decarboxylase beta chain" evidence="1">
    <location>
        <begin position="1"/>
        <end position="24"/>
    </location>
</feature>
<feature type="chain" id="PRO_1000124828" description="Aspartate 1-decarboxylase alpha chain" evidence="1">
    <location>
        <begin position="25"/>
        <end position="132"/>
    </location>
</feature>
<feature type="active site" description="Schiff-base intermediate with substrate; via pyruvic acid" evidence="1">
    <location>
        <position position="25"/>
    </location>
</feature>
<feature type="active site" description="Proton donor" evidence="1">
    <location>
        <position position="58"/>
    </location>
</feature>
<feature type="binding site" evidence="1">
    <location>
        <position position="57"/>
    </location>
    <ligand>
        <name>substrate</name>
    </ligand>
</feature>
<feature type="binding site" evidence="1">
    <location>
        <begin position="73"/>
        <end position="75"/>
    </location>
    <ligand>
        <name>substrate</name>
    </ligand>
</feature>
<feature type="modified residue" description="Pyruvic acid (Ser)" evidence="1">
    <location>
        <position position="25"/>
    </location>
</feature>
<comment type="function">
    <text evidence="1">Catalyzes the pyruvoyl-dependent decarboxylation of aspartate to produce beta-alanine.</text>
</comment>
<comment type="catalytic activity">
    <reaction evidence="1">
        <text>L-aspartate + H(+) = beta-alanine + CO2</text>
        <dbReference type="Rhea" id="RHEA:19497"/>
        <dbReference type="ChEBI" id="CHEBI:15378"/>
        <dbReference type="ChEBI" id="CHEBI:16526"/>
        <dbReference type="ChEBI" id="CHEBI:29991"/>
        <dbReference type="ChEBI" id="CHEBI:57966"/>
        <dbReference type="EC" id="4.1.1.11"/>
    </reaction>
</comment>
<comment type="cofactor">
    <cofactor evidence="1">
        <name>pyruvate</name>
        <dbReference type="ChEBI" id="CHEBI:15361"/>
    </cofactor>
    <text evidence="1">Binds 1 pyruvoyl group covalently per subunit.</text>
</comment>
<comment type="pathway">
    <text evidence="1">Cofactor biosynthesis; (R)-pantothenate biosynthesis; beta-alanine from L-aspartate: step 1/1.</text>
</comment>
<comment type="subunit">
    <text evidence="1">Heterooctamer of four alpha and four beta subunits.</text>
</comment>
<comment type="subcellular location">
    <subcellularLocation>
        <location evidence="1">Cytoplasm</location>
    </subcellularLocation>
</comment>
<comment type="PTM">
    <text evidence="1">Is synthesized initially as an inactive proenzyme, which is activated by self-cleavage at a specific serine bond to produce a beta-subunit with a hydroxyl group at its C-terminus and an alpha-subunit with a pyruvoyl group at its N-terminus.</text>
</comment>
<comment type="similarity">
    <text evidence="1">Belongs to the PanD family.</text>
</comment>
<sequence length="132" mass="14489">MNRIMHKSKIHRATVTEANLNYVGSITIDEDLMDAADVLENEKIQVVNNNNGARFETYVIPGPRGSGVICLNGAAARLVQPGDKVILITYGIYDDAEARQHRPTVIFLDDQNRIIADARREKAGETAPTGEA</sequence>